<reference key="1">
    <citation type="submission" date="1992-08" db="EMBL/GenBank/DDBJ databases">
        <authorList>
            <person name="Lorenz D."/>
            <person name="Sokatch J.R."/>
        </authorList>
    </citation>
    <scope>NUCLEOTIDE SEQUENCE [GENOMIC DNA]</scope>
    <source>
        <strain>G2</strain>
    </source>
</reference>
<sequence length="394" mass="44657">MLAQLPPALQSLHLPLRLKLWDGNQFDLGPSPQVTILVKEPQLIGQLTHPSMEQLGTAFVEGKLELEGDIGEAIRVCDELSEALFTDEDEQPPERRSHDKRTDAEAISYHYDVSNAFYQLWLDQDMAYSCAYFREPDNTLDQAQQDKFDHLCRKLRLNAGDYLLDVGCGWGGLARFAAREYDAKVFGITLSKEQLKLGRQRVKAEGLTDKVDLQILDYRDLPQDGRFDKVVSVGMFEHVGHANLALYCQKLFGAVREGGLVMNHGITAKHVDGRPVGRGAGEFIDRYVFPHGELPHLSMISASICEAGLEVVDVESLRLHYAKTLHHWSENLENQLHKAAALVPEKTLRIWRLYLAGCAYAFEKGWINLHQILAVKPYADGHHDLPWTREDMYR</sequence>
<comment type="similarity">
    <text evidence="2">Belongs to the CFA/CMAS family.</text>
</comment>
<keyword id="KW-0444">Lipid biosynthesis</keyword>
<keyword id="KW-0443">Lipid metabolism</keyword>
<keyword id="KW-0489">Methyltransferase</keyword>
<keyword id="KW-0949">S-adenosyl-L-methionine</keyword>
<keyword id="KW-0808">Transferase</keyword>
<proteinExistence type="inferred from homology"/>
<feature type="chain" id="PRO_0000066296" description="Probable fatty acid methyltransferase">
    <location>
        <begin position="1"/>
        <end position="394"/>
    </location>
</feature>
<feature type="active site" evidence="1">
    <location>
        <position position="358"/>
    </location>
</feature>
<feature type="binding site" evidence="1">
    <location>
        <begin position="128"/>
        <end position="129"/>
    </location>
    <ligand>
        <name>S-adenosyl-L-methionine</name>
        <dbReference type="ChEBI" id="CHEBI:59789"/>
    </ligand>
</feature>
<feature type="binding site" evidence="1">
    <location>
        <begin position="163"/>
        <end position="171"/>
    </location>
    <ligand>
        <name>S-adenosyl-L-methionine</name>
        <dbReference type="ChEBI" id="CHEBI:59789"/>
    </ligand>
</feature>
<feature type="binding site" evidence="1">
    <location>
        <begin position="189"/>
        <end position="194"/>
    </location>
    <ligand>
        <name>S-adenosyl-L-methionine</name>
        <dbReference type="ChEBI" id="CHEBI:59789"/>
    </ligand>
</feature>
<accession>P31049</accession>
<organism>
    <name type="scientific">Pseudomonas putida</name>
    <name type="common">Arthrobacter siderocapsulatus</name>
    <dbReference type="NCBI Taxonomy" id="303"/>
    <lineage>
        <taxon>Bacteria</taxon>
        <taxon>Pseudomonadati</taxon>
        <taxon>Pseudomonadota</taxon>
        <taxon>Gammaproteobacteria</taxon>
        <taxon>Pseudomonadales</taxon>
        <taxon>Pseudomonadaceae</taxon>
        <taxon>Pseudomonas</taxon>
    </lineage>
</organism>
<evidence type="ECO:0000250" key="1"/>
<evidence type="ECO:0000305" key="2"/>
<name>FAMT_PSEPU</name>
<dbReference type="EC" id="2.1.1.-"/>
<dbReference type="EMBL" id="X55704">
    <property type="protein sequence ID" value="CAA39234.1"/>
    <property type="molecule type" value="Genomic_DNA"/>
</dbReference>
<dbReference type="RefSeq" id="WP_019099173.1">
    <property type="nucleotide sequence ID" value="NZ_AP022324.1"/>
</dbReference>
<dbReference type="SMR" id="P31049"/>
<dbReference type="eggNOG" id="COG2230">
    <property type="taxonomic scope" value="Bacteria"/>
</dbReference>
<dbReference type="GO" id="GO:0008168">
    <property type="term" value="F:methyltransferase activity"/>
    <property type="evidence" value="ECO:0007669"/>
    <property type="project" value="UniProtKB-KW"/>
</dbReference>
<dbReference type="GO" id="GO:0008610">
    <property type="term" value="P:lipid biosynthetic process"/>
    <property type="evidence" value="ECO:0007669"/>
    <property type="project" value="InterPro"/>
</dbReference>
<dbReference type="GO" id="GO:0032259">
    <property type="term" value="P:methylation"/>
    <property type="evidence" value="ECO:0007669"/>
    <property type="project" value="UniProtKB-KW"/>
</dbReference>
<dbReference type="CDD" id="cd02440">
    <property type="entry name" value="AdoMet_MTases"/>
    <property type="match status" value="1"/>
</dbReference>
<dbReference type="Gene3D" id="3.40.50.150">
    <property type="entry name" value="Vaccinia Virus protein VP39"/>
    <property type="match status" value="1"/>
</dbReference>
<dbReference type="InterPro" id="IPR050723">
    <property type="entry name" value="CFA/CMAS"/>
</dbReference>
<dbReference type="InterPro" id="IPR048027">
    <property type="entry name" value="CfaB-like"/>
</dbReference>
<dbReference type="InterPro" id="IPR003333">
    <property type="entry name" value="CMAS"/>
</dbReference>
<dbReference type="InterPro" id="IPR057206">
    <property type="entry name" value="DUF7884"/>
</dbReference>
<dbReference type="InterPro" id="IPR029063">
    <property type="entry name" value="SAM-dependent_MTases_sf"/>
</dbReference>
<dbReference type="NCBIfam" id="NF040703">
    <property type="entry name" value="cyclopro_CfaB"/>
    <property type="match status" value="1"/>
</dbReference>
<dbReference type="PANTHER" id="PTHR43667">
    <property type="entry name" value="CYCLOPROPANE-FATTY-ACYL-PHOSPHOLIPID SYNTHASE"/>
    <property type="match status" value="1"/>
</dbReference>
<dbReference type="PANTHER" id="PTHR43667:SF1">
    <property type="entry name" value="CYCLOPROPANE-FATTY-ACYL-PHOSPHOLIPID SYNTHASE"/>
    <property type="match status" value="1"/>
</dbReference>
<dbReference type="Pfam" id="PF02353">
    <property type="entry name" value="CMAS"/>
    <property type="match status" value="1"/>
</dbReference>
<dbReference type="Pfam" id="PF25371">
    <property type="entry name" value="DUF7884"/>
    <property type="match status" value="1"/>
</dbReference>
<dbReference type="PIRSF" id="PIRSF003085">
    <property type="entry name" value="CMAS"/>
    <property type="match status" value="1"/>
</dbReference>
<dbReference type="SUPFAM" id="SSF53335">
    <property type="entry name" value="S-adenosyl-L-methionine-dependent methyltransferases"/>
    <property type="match status" value="1"/>
</dbReference>
<protein>
    <recommendedName>
        <fullName>Probable fatty acid methyltransferase</fullName>
        <ecNumber>2.1.1.-</ecNumber>
    </recommendedName>
    <alternativeName>
        <fullName>ORF3</fullName>
    </alternativeName>
    <alternativeName>
        <fullName>S-adenosylmethionine-dependent methyltransferase</fullName>
        <shortName>AdoMet-MT</shortName>
        <shortName>SAM-MT</shortName>
    </alternativeName>
</protein>